<feature type="chain" id="PRO_0000365087" description="COX assembly mitochondrial protein 2 homolog">
    <location>
        <begin position="1"/>
        <end position="79"/>
    </location>
</feature>
<feature type="domain" description="CHCH" evidence="2">
    <location>
        <begin position="11"/>
        <end position="55"/>
    </location>
</feature>
<feature type="region of interest" description="Disordered" evidence="3">
    <location>
        <begin position="58"/>
        <end position="79"/>
    </location>
</feature>
<feature type="short sequence motif" description="Cx9C motif 1" evidence="2">
    <location>
        <begin position="14"/>
        <end position="24"/>
    </location>
</feature>
<feature type="short sequence motif" description="Cx9C motif 2" evidence="2">
    <location>
        <begin position="37"/>
        <end position="47"/>
    </location>
</feature>
<feature type="disulfide bond" evidence="2">
    <location>
        <begin position="14"/>
        <end position="47"/>
    </location>
</feature>
<feature type="disulfide bond" evidence="2">
    <location>
        <begin position="24"/>
        <end position="37"/>
    </location>
</feature>
<keyword id="KW-1015">Disulfide bond</keyword>
<keyword id="KW-0496">Mitochondrion</keyword>
<keyword id="KW-1185">Reference proteome</keyword>
<dbReference type="EMBL" id="BC111685">
    <property type="protein sequence ID" value="AAI11686.1"/>
    <property type="molecule type" value="mRNA"/>
</dbReference>
<dbReference type="RefSeq" id="NP_001106646.1">
    <property type="nucleotide sequence ID" value="NM_001113175.2"/>
</dbReference>
<dbReference type="RefSeq" id="XP_010796373.1">
    <property type="nucleotide sequence ID" value="XM_010798071.1"/>
</dbReference>
<dbReference type="SMR" id="Q2NKR3"/>
<dbReference type="FunCoup" id="Q2NKR3">
    <property type="interactions" value="600"/>
</dbReference>
<dbReference type="STRING" id="9913.ENSBTAP00000022619"/>
<dbReference type="PaxDb" id="9913-ENSBTAP00000022619"/>
<dbReference type="Ensembl" id="ENSBTAT00000032574.6">
    <property type="protein sequence ID" value="ENSBTAP00000052197.4"/>
    <property type="gene ID" value="ENSBTAG00000030274.5"/>
</dbReference>
<dbReference type="GeneID" id="614078"/>
<dbReference type="KEGG" id="bta:101905951"/>
<dbReference type="KEGG" id="bta:614078"/>
<dbReference type="CTD" id="56942"/>
<dbReference type="VEuPathDB" id="HostDB:ENSBTAG00000017009"/>
<dbReference type="eggNOG" id="KOG4148">
    <property type="taxonomic scope" value="Eukaryota"/>
</dbReference>
<dbReference type="GeneTree" id="ENSGT00390000016908"/>
<dbReference type="HOGENOM" id="CLU_169286_2_0_1"/>
<dbReference type="InParanoid" id="Q2NKR3"/>
<dbReference type="OMA" id="CLRNEYI"/>
<dbReference type="OrthoDB" id="532630at2759"/>
<dbReference type="TreeFam" id="TF314049"/>
<dbReference type="Proteomes" id="UP000009136">
    <property type="component" value="Chromosome 7"/>
</dbReference>
<dbReference type="Bgee" id="ENSBTAG00000017009">
    <property type="expression patterns" value="Expressed in tongue muscle and 106 other cell types or tissues"/>
</dbReference>
<dbReference type="GO" id="GO:0005739">
    <property type="term" value="C:mitochondrion"/>
    <property type="evidence" value="ECO:0000250"/>
    <property type="project" value="UniProtKB"/>
</dbReference>
<dbReference type="InterPro" id="IPR013892">
    <property type="entry name" value="Cyt_c_biogenesis_Cmc1-like"/>
</dbReference>
<dbReference type="PANTHER" id="PTHR22977">
    <property type="entry name" value="COX ASSEMBLY MITOCHONDRIAL PROTEIN"/>
    <property type="match status" value="1"/>
</dbReference>
<dbReference type="PANTHER" id="PTHR22977:SF1">
    <property type="entry name" value="COX ASSEMBLY MITOCHONDRIAL PROTEIN 2 HOMOLOG"/>
    <property type="match status" value="1"/>
</dbReference>
<dbReference type="Pfam" id="PF08583">
    <property type="entry name" value="Cmc1"/>
    <property type="match status" value="1"/>
</dbReference>
<dbReference type="PROSITE" id="PS51808">
    <property type="entry name" value="CHCH"/>
    <property type="match status" value="1"/>
</dbReference>
<reference key="1">
    <citation type="submission" date="2006-01" db="EMBL/GenBank/DDBJ databases">
        <authorList>
            <consortium name="NIH - Mammalian Gene Collection (MGC) project"/>
        </authorList>
    </citation>
    <scope>NUCLEOTIDE SEQUENCE [LARGE SCALE MRNA]</scope>
    <source>
        <strain>Hereford</strain>
        <tissue>Hypothalamus</tissue>
    </source>
</reference>
<gene>
    <name type="primary">CMC2</name>
</gene>
<evidence type="ECO:0000250" key="1"/>
<evidence type="ECO:0000255" key="2">
    <source>
        <dbReference type="PROSITE-ProRule" id="PRU01150"/>
    </source>
</evidence>
<evidence type="ECO:0000256" key="3">
    <source>
        <dbReference type="SAM" id="MobiDB-lite"/>
    </source>
</evidence>
<evidence type="ECO:0000305" key="4"/>
<comment type="function">
    <text evidence="1">May be involved in cytochrome c oxidase biogenesis.</text>
</comment>
<comment type="subcellular location">
    <subcellularLocation>
        <location evidence="1">Mitochondrion</location>
    </subcellularLocation>
</comment>
<comment type="similarity">
    <text evidence="4">Belongs to the CMC family.</text>
</comment>
<organism>
    <name type="scientific">Bos taurus</name>
    <name type="common">Bovine</name>
    <dbReference type="NCBI Taxonomy" id="9913"/>
    <lineage>
        <taxon>Eukaryota</taxon>
        <taxon>Metazoa</taxon>
        <taxon>Chordata</taxon>
        <taxon>Craniata</taxon>
        <taxon>Vertebrata</taxon>
        <taxon>Euteleostomi</taxon>
        <taxon>Mammalia</taxon>
        <taxon>Eutheria</taxon>
        <taxon>Laurasiatheria</taxon>
        <taxon>Artiodactyla</taxon>
        <taxon>Ruminantia</taxon>
        <taxon>Pecora</taxon>
        <taxon>Bovidae</taxon>
        <taxon>Bovinae</taxon>
        <taxon>Bos</taxon>
    </lineage>
</organism>
<name>COXM2_BOVIN</name>
<protein>
    <recommendedName>
        <fullName>COX assembly mitochondrial protein 2 homolog</fullName>
    </recommendedName>
</protein>
<accession>Q2NKR3</accession>
<proteinExistence type="inferred from homology"/>
<sequence>MHPDLSPHLHTEECNVLINLLKECHKNHSILKFFGHCNDLDREMRKCLKNEYMEKRNKSRELGNAMRKRLFNPPEESEN</sequence>